<proteinExistence type="evidence at protein level"/>
<evidence type="ECO:0000269" key="1">
    <source>
    </source>
</evidence>
<evidence type="ECO:0000303" key="2">
    <source>
    </source>
</evidence>
<evidence type="ECO:0000305" key="3">
    <source>
    </source>
</evidence>
<sequence>NLDTPYCFYSGDYGG</sequence>
<keyword id="KW-0049">Antioxidant</keyword>
<keyword id="KW-0903">Direct protein sequencing</keyword>
<keyword id="KW-0166">Nematocyst</keyword>
<keyword id="KW-0964">Secreted</keyword>
<accession>P0DUW7</accession>
<dbReference type="GO" id="GO:0005576">
    <property type="term" value="C:extracellular region"/>
    <property type="evidence" value="ECO:0007669"/>
    <property type="project" value="UniProtKB-SubCell"/>
</dbReference>
<dbReference type="GO" id="GO:0042151">
    <property type="term" value="C:nematocyst"/>
    <property type="evidence" value="ECO:0007669"/>
    <property type="project" value="UniProtKB-SubCell"/>
</dbReference>
<dbReference type="GO" id="GO:0016209">
    <property type="term" value="F:antioxidant activity"/>
    <property type="evidence" value="ECO:0007669"/>
    <property type="project" value="UniProtKB-KW"/>
</dbReference>
<organism>
    <name type="scientific">Stomolophus meleagris</name>
    <name type="common">Cannonball jelly</name>
    <dbReference type="NCBI Taxonomy" id="168796"/>
    <lineage>
        <taxon>Eukaryota</taxon>
        <taxon>Metazoa</taxon>
        <taxon>Cnidaria</taxon>
        <taxon>Scyphozoa</taxon>
        <taxon>Rhizostomeae</taxon>
        <taxon>Stomolophidae</taxon>
        <taxon>Stomolophus</taxon>
    </lineage>
</organism>
<name>SMP90_STOME</name>
<comment type="function">
    <text evidence="1">Has strong superoxide anion radical-scavenging activity (EC(50)~16 ug/mL).</text>
</comment>
<comment type="subcellular location">
    <subcellularLocation>
        <location evidence="1">Secreted</location>
    </subcellularLocation>
    <subcellularLocation>
        <location evidence="1">Nematocyst</location>
    </subcellularLocation>
</comment>
<comment type="miscellaneous">
    <text evidence="1">Has an apparent molecular weight of ~90 kDa.</text>
</comment>
<protein>
    <recommendedName>
        <fullName evidence="2">Antioxidant protein SmP90</fullName>
    </recommendedName>
</protein>
<feature type="chain" id="PRO_0000453748" description="Antioxidant protein SmP90" evidence="1">
    <location>
        <begin position="1"/>
        <end position="15" status="greater than"/>
    </location>
</feature>
<feature type="non-terminal residue" evidence="3">
    <location>
        <position position="15"/>
    </location>
</feature>
<reference key="1">
    <citation type="journal article" date="2012" name="Int. J. Biol. Macromol.">
        <title>Isolation, identification and characterization of a novel antioxidant protein from the nematocyst of the jellyfish Stomolophus meleagris.</title>
        <authorList>
            <person name="Li R."/>
            <person name="Yu H."/>
            <person name="Xing R."/>
            <person name="Liu S."/>
            <person name="Qing Y."/>
            <person name="Li K."/>
            <person name="Li B."/>
            <person name="Meng X."/>
            <person name="Cui J."/>
            <person name="Li P."/>
        </authorList>
    </citation>
    <scope>PROTEIN SEQUENCE</scope>
    <scope>SUBCELLULAR LOCATION</scope>
    <scope>IDENTIFICATION BY MASS SPECTROMETRY</scope>
    <scope>FUNCTION</scope>
    <source>
        <tissue>Tentacle</tissue>
    </source>
</reference>